<proteinExistence type="evidence at transcript level"/>
<accession>Q6ZPI3</accession>
<accession>Q3U302</accession>
<accession>Q5CZW7</accession>
<accession>Q80VA8</accession>
<accession>Q8BGT2</accession>
<accession>Q8C9Q0</accession>
<name>LCOR_MOUSE</name>
<evidence type="ECO:0000250" key="1"/>
<evidence type="ECO:0000250" key="2">
    <source>
        <dbReference type="UniProtKB" id="Q96JN0"/>
    </source>
</evidence>
<evidence type="ECO:0000255" key="3"/>
<evidence type="ECO:0000255" key="4">
    <source>
        <dbReference type="PROSITE-ProRule" id="PRU00320"/>
    </source>
</evidence>
<evidence type="ECO:0000256" key="5">
    <source>
        <dbReference type="SAM" id="MobiDB-lite"/>
    </source>
</evidence>
<evidence type="ECO:0000269" key="6">
    <source>
    </source>
</evidence>
<evidence type="ECO:0000305" key="7"/>
<reference key="1">
    <citation type="journal article" date="2003" name="FEBS Lett.">
        <title>Identification and characterization of Mlr1,2: two mouse homologues of Mblk-1, a transcription factor from the honeybee brain.</title>
        <authorList>
            <person name="Kunieda T."/>
            <person name="Park J.-M."/>
            <person name="Takeuchi H."/>
            <person name="Kubo T."/>
        </authorList>
    </citation>
    <scope>NUCLEOTIDE SEQUENCE [MRNA]</scope>
    <scope>FUNCTION</scope>
    <scope>TISSUE SPECIFICITY</scope>
    <source>
        <tissue>Brain</tissue>
    </source>
</reference>
<reference key="2">
    <citation type="journal article" date="2003" name="DNA Res.">
        <title>Prediction of the coding sequences of mouse homologues of KIAA gene: III. The complete nucleotide sequences of 500 mouse KIAA-homologous cDNAs identified by screening of terminal sequences of cDNA clones randomly sampled from size-fractionated libraries.</title>
        <authorList>
            <person name="Okazaki N."/>
            <person name="Kikuno R."/>
            <person name="Ohara R."/>
            <person name="Inamoto S."/>
            <person name="Koseki H."/>
            <person name="Hiraoka S."/>
            <person name="Saga Y."/>
            <person name="Nagase T."/>
            <person name="Ohara O."/>
            <person name="Koga H."/>
        </authorList>
    </citation>
    <scope>NUCLEOTIDE SEQUENCE [LARGE SCALE MRNA]</scope>
    <source>
        <tissue>Embryonic tail</tissue>
    </source>
</reference>
<reference key="3">
    <citation type="journal article" date="2005" name="Science">
        <title>The transcriptional landscape of the mammalian genome.</title>
        <authorList>
            <person name="Carninci P."/>
            <person name="Kasukawa T."/>
            <person name="Katayama S."/>
            <person name="Gough J."/>
            <person name="Frith M.C."/>
            <person name="Maeda N."/>
            <person name="Oyama R."/>
            <person name="Ravasi T."/>
            <person name="Lenhard B."/>
            <person name="Wells C."/>
            <person name="Kodzius R."/>
            <person name="Shimokawa K."/>
            <person name="Bajic V.B."/>
            <person name="Brenner S.E."/>
            <person name="Batalov S."/>
            <person name="Forrest A.R."/>
            <person name="Zavolan M."/>
            <person name="Davis M.J."/>
            <person name="Wilming L.G."/>
            <person name="Aidinis V."/>
            <person name="Allen J.E."/>
            <person name="Ambesi-Impiombato A."/>
            <person name="Apweiler R."/>
            <person name="Aturaliya R.N."/>
            <person name="Bailey T.L."/>
            <person name="Bansal M."/>
            <person name="Baxter L."/>
            <person name="Beisel K.W."/>
            <person name="Bersano T."/>
            <person name="Bono H."/>
            <person name="Chalk A.M."/>
            <person name="Chiu K.P."/>
            <person name="Choudhary V."/>
            <person name="Christoffels A."/>
            <person name="Clutterbuck D.R."/>
            <person name="Crowe M.L."/>
            <person name="Dalla E."/>
            <person name="Dalrymple B.P."/>
            <person name="de Bono B."/>
            <person name="Della Gatta G."/>
            <person name="di Bernardo D."/>
            <person name="Down T."/>
            <person name="Engstrom P."/>
            <person name="Fagiolini M."/>
            <person name="Faulkner G."/>
            <person name="Fletcher C.F."/>
            <person name="Fukushima T."/>
            <person name="Furuno M."/>
            <person name="Futaki S."/>
            <person name="Gariboldi M."/>
            <person name="Georgii-Hemming P."/>
            <person name="Gingeras T.R."/>
            <person name="Gojobori T."/>
            <person name="Green R.E."/>
            <person name="Gustincich S."/>
            <person name="Harbers M."/>
            <person name="Hayashi Y."/>
            <person name="Hensch T.K."/>
            <person name="Hirokawa N."/>
            <person name="Hill D."/>
            <person name="Huminiecki L."/>
            <person name="Iacono M."/>
            <person name="Ikeo K."/>
            <person name="Iwama A."/>
            <person name="Ishikawa T."/>
            <person name="Jakt M."/>
            <person name="Kanapin A."/>
            <person name="Katoh M."/>
            <person name="Kawasawa Y."/>
            <person name="Kelso J."/>
            <person name="Kitamura H."/>
            <person name="Kitano H."/>
            <person name="Kollias G."/>
            <person name="Krishnan S.P."/>
            <person name="Kruger A."/>
            <person name="Kummerfeld S.K."/>
            <person name="Kurochkin I.V."/>
            <person name="Lareau L.F."/>
            <person name="Lazarevic D."/>
            <person name="Lipovich L."/>
            <person name="Liu J."/>
            <person name="Liuni S."/>
            <person name="McWilliam S."/>
            <person name="Madan Babu M."/>
            <person name="Madera M."/>
            <person name="Marchionni L."/>
            <person name="Matsuda H."/>
            <person name="Matsuzawa S."/>
            <person name="Miki H."/>
            <person name="Mignone F."/>
            <person name="Miyake S."/>
            <person name="Morris K."/>
            <person name="Mottagui-Tabar S."/>
            <person name="Mulder N."/>
            <person name="Nakano N."/>
            <person name="Nakauchi H."/>
            <person name="Ng P."/>
            <person name="Nilsson R."/>
            <person name="Nishiguchi S."/>
            <person name="Nishikawa S."/>
            <person name="Nori F."/>
            <person name="Ohara O."/>
            <person name="Okazaki Y."/>
            <person name="Orlando V."/>
            <person name="Pang K.C."/>
            <person name="Pavan W.J."/>
            <person name="Pavesi G."/>
            <person name="Pesole G."/>
            <person name="Petrovsky N."/>
            <person name="Piazza S."/>
            <person name="Reed J."/>
            <person name="Reid J.F."/>
            <person name="Ring B.Z."/>
            <person name="Ringwald M."/>
            <person name="Rost B."/>
            <person name="Ruan Y."/>
            <person name="Salzberg S.L."/>
            <person name="Sandelin A."/>
            <person name="Schneider C."/>
            <person name="Schoenbach C."/>
            <person name="Sekiguchi K."/>
            <person name="Semple C.A."/>
            <person name="Seno S."/>
            <person name="Sessa L."/>
            <person name="Sheng Y."/>
            <person name="Shibata Y."/>
            <person name="Shimada H."/>
            <person name="Shimada K."/>
            <person name="Silva D."/>
            <person name="Sinclair B."/>
            <person name="Sperling S."/>
            <person name="Stupka E."/>
            <person name="Sugiura K."/>
            <person name="Sultana R."/>
            <person name="Takenaka Y."/>
            <person name="Taki K."/>
            <person name="Tammoja K."/>
            <person name="Tan S.L."/>
            <person name="Tang S."/>
            <person name="Taylor M.S."/>
            <person name="Tegner J."/>
            <person name="Teichmann S.A."/>
            <person name="Ueda H.R."/>
            <person name="van Nimwegen E."/>
            <person name="Verardo R."/>
            <person name="Wei C.L."/>
            <person name="Yagi K."/>
            <person name="Yamanishi H."/>
            <person name="Zabarovsky E."/>
            <person name="Zhu S."/>
            <person name="Zimmer A."/>
            <person name="Hide W."/>
            <person name="Bult C."/>
            <person name="Grimmond S.M."/>
            <person name="Teasdale R.D."/>
            <person name="Liu E.T."/>
            <person name="Brusic V."/>
            <person name="Quackenbush J."/>
            <person name="Wahlestedt C."/>
            <person name="Mattick J.S."/>
            <person name="Hume D.A."/>
            <person name="Kai C."/>
            <person name="Sasaki D."/>
            <person name="Tomaru Y."/>
            <person name="Fukuda S."/>
            <person name="Kanamori-Katayama M."/>
            <person name="Suzuki M."/>
            <person name="Aoki J."/>
            <person name="Arakawa T."/>
            <person name="Iida J."/>
            <person name="Imamura K."/>
            <person name="Itoh M."/>
            <person name="Kato T."/>
            <person name="Kawaji H."/>
            <person name="Kawagashira N."/>
            <person name="Kawashima T."/>
            <person name="Kojima M."/>
            <person name="Kondo S."/>
            <person name="Konno H."/>
            <person name="Nakano K."/>
            <person name="Ninomiya N."/>
            <person name="Nishio T."/>
            <person name="Okada M."/>
            <person name="Plessy C."/>
            <person name="Shibata K."/>
            <person name="Shiraki T."/>
            <person name="Suzuki S."/>
            <person name="Tagami M."/>
            <person name="Waki K."/>
            <person name="Watahiki A."/>
            <person name="Okamura-Oho Y."/>
            <person name="Suzuki H."/>
            <person name="Kawai J."/>
            <person name="Hayashizaki Y."/>
        </authorList>
    </citation>
    <scope>NUCLEOTIDE SEQUENCE [LARGE SCALE MRNA]</scope>
    <source>
        <strain>C57BL/6J</strain>
        <tissue>Aorta</tissue>
        <tissue>Dendritic cell</tissue>
        <tissue>Thymus</tissue>
        <tissue>Vein</tissue>
    </source>
</reference>
<reference key="4">
    <citation type="journal article" date="2004" name="Genome Res.">
        <title>The status, quality, and expansion of the NIH full-length cDNA project: the Mammalian Gene Collection (MGC).</title>
        <authorList>
            <consortium name="The MGC Project Team"/>
        </authorList>
    </citation>
    <scope>NUCLEOTIDE SEQUENCE [LARGE SCALE MRNA]</scope>
    <source>
        <strain>C57BL/6J</strain>
        <tissue>Head</tissue>
        <tissue>Mammary gland</tissue>
    </source>
</reference>
<keyword id="KW-0010">Activator</keyword>
<keyword id="KW-0238">DNA-binding</keyword>
<keyword id="KW-1017">Isopeptide bond</keyword>
<keyword id="KW-0539">Nucleus</keyword>
<keyword id="KW-0597">Phosphoprotein</keyword>
<keyword id="KW-1185">Reference proteome</keyword>
<keyword id="KW-0678">Repressor</keyword>
<keyword id="KW-0804">Transcription</keyword>
<keyword id="KW-0805">Transcription regulation</keyword>
<keyword id="KW-0832">Ubl conjugation</keyword>
<dbReference type="EMBL" id="AB076079">
    <property type="protein sequence ID" value="BAC20955.1"/>
    <property type="molecule type" value="mRNA"/>
</dbReference>
<dbReference type="EMBL" id="AK129442">
    <property type="protein sequence ID" value="BAC98252.1"/>
    <property type="status" value="ALT_INIT"/>
    <property type="molecule type" value="mRNA"/>
</dbReference>
<dbReference type="EMBL" id="AK041090">
    <property type="protein sequence ID" value="BAC30816.1"/>
    <property type="molecule type" value="mRNA"/>
</dbReference>
<dbReference type="EMBL" id="AK041621">
    <property type="protein sequence ID" value="BAC31007.2"/>
    <property type="molecule type" value="mRNA"/>
</dbReference>
<dbReference type="EMBL" id="AK155007">
    <property type="protein sequence ID" value="BAE32988.1"/>
    <property type="status" value="ALT_FRAME"/>
    <property type="molecule type" value="mRNA"/>
</dbReference>
<dbReference type="EMBL" id="BC050068">
    <property type="protein sequence ID" value="AAH50068.1"/>
    <property type="molecule type" value="mRNA"/>
</dbReference>
<dbReference type="EMBL" id="BC090652">
    <property type="protein sequence ID" value="AAH90652.1"/>
    <property type="molecule type" value="mRNA"/>
</dbReference>
<dbReference type="CCDS" id="CCDS29810.1"/>
<dbReference type="RefSeq" id="NP_742166.1">
    <property type="nucleotide sequence ID" value="NM_172154.4"/>
</dbReference>
<dbReference type="RefSeq" id="XP_006526912.1">
    <property type="nucleotide sequence ID" value="XM_006526849.3"/>
</dbReference>
<dbReference type="RefSeq" id="XP_006526913.1">
    <property type="nucleotide sequence ID" value="XM_006526850.3"/>
</dbReference>
<dbReference type="SMR" id="Q6ZPI3"/>
<dbReference type="BioGRID" id="229316">
    <property type="interactions" value="2"/>
</dbReference>
<dbReference type="DIP" id="DIP-60279N"/>
<dbReference type="FunCoup" id="Q6ZPI3">
    <property type="interactions" value="1581"/>
</dbReference>
<dbReference type="IntAct" id="Q6ZPI3">
    <property type="interactions" value="1"/>
</dbReference>
<dbReference type="STRING" id="10090.ENSMUSP00000067603"/>
<dbReference type="GlyGen" id="Q6ZPI3">
    <property type="glycosylation" value="1 site, 1 O-linked glycan (1 site)"/>
</dbReference>
<dbReference type="iPTMnet" id="Q6ZPI3"/>
<dbReference type="PhosphoSitePlus" id="Q6ZPI3"/>
<dbReference type="jPOST" id="Q6ZPI3"/>
<dbReference type="PaxDb" id="10090-ENSMUSP00000067603"/>
<dbReference type="ProteomicsDB" id="286181"/>
<dbReference type="Antibodypedia" id="30781">
    <property type="antibodies" value="227 antibodies from 25 providers"/>
</dbReference>
<dbReference type="DNASU" id="212391"/>
<dbReference type="Ensembl" id="ENSMUST00000067795.13">
    <property type="protein sequence ID" value="ENSMUSP00000067603.6"/>
    <property type="gene ID" value="ENSMUSG00000025019.18"/>
</dbReference>
<dbReference type="Ensembl" id="ENSMUST00000163929.2">
    <property type="protein sequence ID" value="ENSMUSP00000126441.2"/>
    <property type="gene ID" value="ENSMUSG00000025019.18"/>
</dbReference>
<dbReference type="GeneID" id="212391"/>
<dbReference type="KEGG" id="mmu:212391"/>
<dbReference type="UCSC" id="uc008hly.1">
    <property type="organism name" value="mouse"/>
</dbReference>
<dbReference type="AGR" id="MGI:2443930"/>
<dbReference type="CTD" id="84458"/>
<dbReference type="MGI" id="MGI:2443930">
    <property type="gene designation" value="Lcor"/>
</dbReference>
<dbReference type="VEuPathDB" id="HostDB:ENSMUSG00000025019"/>
<dbReference type="eggNOG" id="KOG4565">
    <property type="taxonomic scope" value="Eukaryota"/>
</dbReference>
<dbReference type="GeneTree" id="ENSGT00940000154965"/>
<dbReference type="HOGENOM" id="CLU_040042_0_0_1"/>
<dbReference type="InParanoid" id="Q6ZPI3"/>
<dbReference type="PhylomeDB" id="Q6ZPI3"/>
<dbReference type="TreeFam" id="TF319589"/>
<dbReference type="BioGRID-ORCS" id="212391">
    <property type="hits" value="2 hits in 77 CRISPR screens"/>
</dbReference>
<dbReference type="ChiTaRS" id="Lcor">
    <property type="organism name" value="mouse"/>
</dbReference>
<dbReference type="PRO" id="PR:Q6ZPI3"/>
<dbReference type="Proteomes" id="UP000000589">
    <property type="component" value="Chromosome 19"/>
</dbReference>
<dbReference type="RNAct" id="Q6ZPI3">
    <property type="molecule type" value="protein"/>
</dbReference>
<dbReference type="Bgee" id="ENSMUSG00000025019">
    <property type="expression patterns" value="Expressed in epithelium of stomach and 242 other cell types or tissues"/>
</dbReference>
<dbReference type="ExpressionAtlas" id="Q6ZPI3">
    <property type="expression patterns" value="baseline and differential"/>
</dbReference>
<dbReference type="GO" id="GO:0005634">
    <property type="term" value="C:nucleus"/>
    <property type="evidence" value="ECO:0007669"/>
    <property type="project" value="UniProtKB-SubCell"/>
</dbReference>
<dbReference type="GO" id="GO:0003682">
    <property type="term" value="F:chromatin binding"/>
    <property type="evidence" value="ECO:0000314"/>
    <property type="project" value="MGI"/>
</dbReference>
<dbReference type="GO" id="GO:0003677">
    <property type="term" value="F:DNA binding"/>
    <property type="evidence" value="ECO:0007669"/>
    <property type="project" value="UniProtKB-KW"/>
</dbReference>
<dbReference type="GO" id="GO:0000122">
    <property type="term" value="P:negative regulation of transcription by RNA polymerase II"/>
    <property type="evidence" value="ECO:0000314"/>
    <property type="project" value="MGI"/>
</dbReference>
<dbReference type="GO" id="GO:0006357">
    <property type="term" value="P:regulation of transcription by RNA polymerase II"/>
    <property type="evidence" value="ECO:0000314"/>
    <property type="project" value="MGI"/>
</dbReference>
<dbReference type="GO" id="GO:0006366">
    <property type="term" value="P:transcription by RNA polymerase II"/>
    <property type="evidence" value="ECO:0000314"/>
    <property type="project" value="MGI"/>
</dbReference>
<dbReference type="GO" id="GO:0045815">
    <property type="term" value="P:transcription initiation-coupled chromatin remodeling"/>
    <property type="evidence" value="ECO:0000314"/>
    <property type="project" value="ARUK-UCL"/>
</dbReference>
<dbReference type="FunFam" id="1.10.10.60:FF:000019">
    <property type="entry name" value="Ligand-dependent corepressor isoform 1"/>
    <property type="match status" value="1"/>
</dbReference>
<dbReference type="Gene3D" id="1.10.10.60">
    <property type="entry name" value="Homeodomain-like"/>
    <property type="match status" value="1"/>
</dbReference>
<dbReference type="InterPro" id="IPR009057">
    <property type="entry name" value="Homeodomain-like_sf"/>
</dbReference>
<dbReference type="InterPro" id="IPR007889">
    <property type="entry name" value="HTH_Psq"/>
</dbReference>
<dbReference type="PANTHER" id="PTHR21545:SF14">
    <property type="entry name" value="LIGAND-DEPENDENT COREPRESSOR"/>
    <property type="match status" value="1"/>
</dbReference>
<dbReference type="PANTHER" id="PTHR21545">
    <property type="entry name" value="TRANSCRIPTION FACTOR MLR1/2"/>
    <property type="match status" value="1"/>
</dbReference>
<dbReference type="Pfam" id="PF05225">
    <property type="entry name" value="HTH_psq"/>
    <property type="match status" value="1"/>
</dbReference>
<dbReference type="SUPFAM" id="SSF46689">
    <property type="entry name" value="Homeodomain-like"/>
    <property type="match status" value="1"/>
</dbReference>
<dbReference type="PROSITE" id="PS50960">
    <property type="entry name" value="HTH_PSQ"/>
    <property type="match status" value="1"/>
</dbReference>
<organism>
    <name type="scientific">Mus musculus</name>
    <name type="common">Mouse</name>
    <dbReference type="NCBI Taxonomy" id="10090"/>
    <lineage>
        <taxon>Eukaryota</taxon>
        <taxon>Metazoa</taxon>
        <taxon>Chordata</taxon>
        <taxon>Craniata</taxon>
        <taxon>Vertebrata</taxon>
        <taxon>Euteleostomi</taxon>
        <taxon>Mammalia</taxon>
        <taxon>Eutheria</taxon>
        <taxon>Euarchontoglires</taxon>
        <taxon>Glires</taxon>
        <taxon>Rodentia</taxon>
        <taxon>Myomorpha</taxon>
        <taxon>Muroidea</taxon>
        <taxon>Muridae</taxon>
        <taxon>Murinae</taxon>
        <taxon>Mus</taxon>
        <taxon>Mus</taxon>
    </lineage>
</organism>
<comment type="function">
    <text evidence="1 6">Repressor of ligand-dependent transcription activation by various nuclear repressors. Repressor of ligand-dependent transcription activation by ESR1, ESR2, NR3C1, PGR, RARA, RARB, RARG, RXRA and VDR (By similarity). May act as transcription activator that binds DNA elements with the sequence 5'-CCCTATCGATCGATCTCTACCT-3'.</text>
</comment>
<comment type="subunit">
    <text evidence="1">Interacts with ESR1 and ESR2 in the presence of estradiol. Interacts with CTBP1, HDAC3 and HDAC6. Component of a large corepressor complex that contains about 20 proteins, including CTBP1, CTBP2, HDAC1 and HDAC2 (By similarity).</text>
</comment>
<comment type="subcellular location">
    <subcellularLocation>
        <location evidence="4">Nucleus</location>
    </subcellularLocation>
</comment>
<comment type="tissue specificity">
    <text evidence="6">Detected in heart and kidney.</text>
</comment>
<comment type="sequence caution" evidence="7">
    <conflict type="erroneous initiation">
        <sequence resource="EMBL-CDS" id="BAC98252"/>
    </conflict>
</comment>
<comment type="sequence caution" evidence="7">
    <conflict type="frameshift">
        <sequence resource="EMBL-CDS" id="BAE32988"/>
    </conflict>
</comment>
<protein>
    <recommendedName>
        <fullName>Ligand-dependent corepressor</fullName>
        <shortName>LCoR</shortName>
    </recommendedName>
    <alternativeName>
        <fullName>Mblk1-related protein 2</fullName>
    </alternativeName>
</protein>
<sequence length="433" mass="47125">MQRMIQQFAAEYTSKTSSTQDPSQPNSTKNQSLPKASPVTTSPTAATTQNPVLSKLLMADQDSPLDLTVRKSQSEPSEQDGVLDLSTKKSPCASSTSLSHSPGCSSTQGNGRPGRPSQYRPDGLRSGDGVPPRSLQDGTREGFGHSTSLKVPLARSLQISEELLSRNQLSTAASLGPSGLQNHGQHLILSREASWAKPHYEFSLSRMKFRGNGALSNISDLPFLAENSAFPKMAHQTKQDGKRDMSHSSPVDLKIPQVRGMDLSWESRTGDQYSYSSLVMGSQTESALSKKLRAILPKQNRKSMLDAGPDSWGSDAEQSTSGQPYPTSDQEGDPGSKQPRKKRGRYRQYNSEILEEAISVVMSGKMSVSKAQSIYGIPHSTLEYKVKERLGTLKNPPKKKMKLMRSEGPDVSVKIELDPQGEAAQSANESKTE</sequence>
<feature type="chain" id="PRO_0000236808" description="Ligand-dependent corepressor">
    <location>
        <begin position="1"/>
        <end position="433"/>
    </location>
</feature>
<feature type="domain" description="HTH psq-type" evidence="4">
    <location>
        <begin position="340"/>
        <end position="392"/>
    </location>
</feature>
<feature type="DNA-binding region" description="H-T-H motif" evidence="4">
    <location>
        <begin position="368"/>
        <end position="388"/>
    </location>
</feature>
<feature type="region of interest" description="Disordered" evidence="5">
    <location>
        <begin position="1"/>
        <end position="147"/>
    </location>
</feature>
<feature type="region of interest" description="Disordered" evidence="5">
    <location>
        <begin position="299"/>
        <end position="348"/>
    </location>
</feature>
<feature type="region of interest" description="Disordered" evidence="5">
    <location>
        <begin position="393"/>
        <end position="412"/>
    </location>
</feature>
<feature type="short sequence motif" description="Interaction with nuclear receptors" evidence="1">
    <location>
        <begin position="53"/>
        <end position="57"/>
    </location>
</feature>
<feature type="short sequence motif" description="Nuclear localization signal" evidence="3">
    <location>
        <begin position="339"/>
        <end position="345"/>
    </location>
</feature>
<feature type="compositionally biased region" description="Polar residues" evidence="5">
    <location>
        <begin position="13"/>
        <end position="34"/>
    </location>
</feature>
<feature type="compositionally biased region" description="Low complexity" evidence="5">
    <location>
        <begin position="36"/>
        <end position="48"/>
    </location>
</feature>
<feature type="compositionally biased region" description="Polar residues" evidence="5">
    <location>
        <begin position="88"/>
        <end position="110"/>
    </location>
</feature>
<feature type="compositionally biased region" description="Polar residues" evidence="5">
    <location>
        <begin position="316"/>
        <end position="329"/>
    </location>
</feature>
<feature type="modified residue" description="Phosphoserine" evidence="2">
    <location>
        <position position="42"/>
    </location>
</feature>
<feature type="modified residue" description="Phosphoserine" evidence="2">
    <location>
        <position position="63"/>
    </location>
</feature>
<feature type="modified residue" description="Phosphoserine" evidence="2">
    <location>
        <position position="249"/>
    </location>
</feature>
<feature type="cross-link" description="Glycyl lysine isopeptide (Lys-Gly) (interchain with G-Cter in SUMO2)" evidence="2">
    <location>
        <position position="254"/>
    </location>
</feature>
<feature type="cross-link" description="Glycyl lysine isopeptide (Lys-Gly) (interchain with G-Cter in SUMO2)" evidence="2">
    <location>
        <position position="414"/>
    </location>
</feature>
<feature type="sequence conflict" description="In Ref. 3; BAE32988." evidence="7" ref="3">
    <original>S</original>
    <variation>F</variation>
    <location>
        <position position="311"/>
    </location>
</feature>
<feature type="sequence conflict" description="In Ref. 4; AAH90652." evidence="7" ref="4">
    <original>L</original>
    <variation>P</variation>
    <location>
        <position position="382"/>
    </location>
</feature>
<gene>
    <name type="primary">Lcor</name>
    <name type="synonym">Kiaa1795</name>
    <name type="synonym">Mlr2</name>
</gene>